<evidence type="ECO:0000250" key="1"/>
<evidence type="ECO:0000255" key="2">
    <source>
        <dbReference type="PROSITE-ProRule" id="PRU00145"/>
    </source>
</evidence>
<evidence type="ECO:0000255" key="3">
    <source>
        <dbReference type="PROSITE-ProRule" id="PRU00191"/>
    </source>
</evidence>
<evidence type="ECO:0000305" key="4"/>
<evidence type="ECO:0007744" key="5">
    <source>
    </source>
</evidence>
<evidence type="ECO:0007744" key="6">
    <source>
    </source>
</evidence>
<dbReference type="EMBL" id="AF163255">
    <property type="protein sequence ID" value="AAD49698.1"/>
    <property type="molecule type" value="mRNA"/>
</dbReference>
<dbReference type="EMBL" id="AF186023">
    <property type="protein sequence ID" value="AAF14579.1"/>
    <property type="molecule type" value="mRNA"/>
</dbReference>
<dbReference type="EMBL" id="BC014759">
    <property type="protein sequence ID" value="AAH14759.1"/>
    <property type="molecule type" value="mRNA"/>
</dbReference>
<dbReference type="CCDS" id="CCDS17864.1"/>
<dbReference type="RefSeq" id="NP_036062.1">
    <property type="nucleotide sequence ID" value="NM_011932.3"/>
</dbReference>
<dbReference type="SMR" id="Q9QXT1"/>
<dbReference type="FunCoup" id="Q9QXT1">
    <property type="interactions" value="1271"/>
</dbReference>
<dbReference type="STRING" id="10090.ENSMUSP00000029806"/>
<dbReference type="iPTMnet" id="Q9QXT1"/>
<dbReference type="PhosphoSitePlus" id="Q9QXT1"/>
<dbReference type="PaxDb" id="10090-ENSMUSP00000029806"/>
<dbReference type="ProteomicsDB" id="279827"/>
<dbReference type="Pumba" id="Q9QXT1"/>
<dbReference type="Antibodypedia" id="25934">
    <property type="antibodies" value="450 antibodies from 36 providers"/>
</dbReference>
<dbReference type="DNASU" id="26377"/>
<dbReference type="Ensembl" id="ENSMUST00000029806.13">
    <property type="protein sequence ID" value="ENSMUSP00000029806.7"/>
    <property type="gene ID" value="ENSMUSG00000028159.15"/>
</dbReference>
<dbReference type="GeneID" id="26377"/>
<dbReference type="KEGG" id="mmu:26377"/>
<dbReference type="UCSC" id="uc008rmt.1">
    <property type="organism name" value="mouse"/>
</dbReference>
<dbReference type="AGR" id="MGI:1347063"/>
<dbReference type="CTD" id="27071"/>
<dbReference type="MGI" id="MGI:1347063">
    <property type="gene designation" value="Dapp1"/>
</dbReference>
<dbReference type="VEuPathDB" id="HostDB:ENSMUSG00000028159"/>
<dbReference type="eggNOG" id="KOG0017">
    <property type="taxonomic scope" value="Eukaryota"/>
</dbReference>
<dbReference type="GeneTree" id="ENSGT00910000144274"/>
<dbReference type="HOGENOM" id="CLU_099070_0_0_1"/>
<dbReference type="InParanoid" id="Q9QXT1"/>
<dbReference type="OMA" id="ALGWYHD"/>
<dbReference type="OrthoDB" id="185175at2759"/>
<dbReference type="PhylomeDB" id="Q9QXT1"/>
<dbReference type="TreeFam" id="TF105418"/>
<dbReference type="Reactome" id="R-MMU-983695">
    <property type="pathway name" value="Antigen activates B Cell Receptor (BCR) leading to generation of second messengers"/>
</dbReference>
<dbReference type="BioGRID-ORCS" id="26377">
    <property type="hits" value="1 hit in 80 CRISPR screens"/>
</dbReference>
<dbReference type="PRO" id="PR:Q9QXT1"/>
<dbReference type="Proteomes" id="UP000000589">
    <property type="component" value="Chromosome 3"/>
</dbReference>
<dbReference type="RNAct" id="Q9QXT1">
    <property type="molecule type" value="protein"/>
</dbReference>
<dbReference type="Bgee" id="ENSMUSG00000028159">
    <property type="expression patterns" value="Expressed in epithelium of small intestine and 161 other cell types or tissues"/>
</dbReference>
<dbReference type="ExpressionAtlas" id="Q9QXT1">
    <property type="expression patterns" value="baseline and differential"/>
</dbReference>
<dbReference type="GO" id="GO:0005737">
    <property type="term" value="C:cytoplasm"/>
    <property type="evidence" value="ECO:0007669"/>
    <property type="project" value="UniProtKB-SubCell"/>
</dbReference>
<dbReference type="GO" id="GO:0005886">
    <property type="term" value="C:plasma membrane"/>
    <property type="evidence" value="ECO:0007669"/>
    <property type="project" value="Ensembl"/>
</dbReference>
<dbReference type="GO" id="GO:0005547">
    <property type="term" value="F:phosphatidylinositol-3,4,5-trisphosphate binding"/>
    <property type="evidence" value="ECO:0007669"/>
    <property type="project" value="Ensembl"/>
</dbReference>
<dbReference type="GO" id="GO:0043325">
    <property type="term" value="F:phosphatidylinositol-3,4-bisphosphate binding"/>
    <property type="evidence" value="ECO:0007669"/>
    <property type="project" value="Ensembl"/>
</dbReference>
<dbReference type="CDD" id="cd10573">
    <property type="entry name" value="PH_DAPP1"/>
    <property type="match status" value="1"/>
</dbReference>
<dbReference type="CDD" id="cd10355">
    <property type="entry name" value="SH2_DAPP1_BAM32_like"/>
    <property type="match status" value="1"/>
</dbReference>
<dbReference type="FunFam" id="2.30.29.30:FF:000229">
    <property type="entry name" value="Dual adapter for phosphotyrosine and 3-phosphotyrosine and 3-phosphoinositide"/>
    <property type="match status" value="1"/>
</dbReference>
<dbReference type="FunFam" id="3.30.505.10:FF:000053">
    <property type="entry name" value="Dual adapter for phosphotyrosine and 3-phosphotyrosine and 3-phosphoinositide"/>
    <property type="match status" value="1"/>
</dbReference>
<dbReference type="Gene3D" id="2.30.29.30">
    <property type="entry name" value="Pleckstrin-homology domain (PH domain)/Phosphotyrosine-binding domain (PTB)"/>
    <property type="match status" value="1"/>
</dbReference>
<dbReference type="Gene3D" id="3.30.505.10">
    <property type="entry name" value="SH2 domain"/>
    <property type="match status" value="1"/>
</dbReference>
<dbReference type="InterPro" id="IPR035843">
    <property type="entry name" value="DAPP1_SH2"/>
</dbReference>
<dbReference type="InterPro" id="IPR011993">
    <property type="entry name" value="PH-like_dom_sf"/>
</dbReference>
<dbReference type="InterPro" id="IPR001849">
    <property type="entry name" value="PH_domain"/>
</dbReference>
<dbReference type="InterPro" id="IPR051707">
    <property type="entry name" value="PI-Interact_SigTrans_Reg"/>
</dbReference>
<dbReference type="InterPro" id="IPR000980">
    <property type="entry name" value="SH2"/>
</dbReference>
<dbReference type="InterPro" id="IPR036860">
    <property type="entry name" value="SH2_dom_sf"/>
</dbReference>
<dbReference type="PANTHER" id="PTHR14336:SF15">
    <property type="entry name" value="DUAL ADAPTER FOR PHOSPHOTYROSINE AND 3-PHOSPHOTYROSINE AND 3-PHOSPHOINOSITIDE"/>
    <property type="match status" value="1"/>
</dbReference>
<dbReference type="PANTHER" id="PTHR14336">
    <property type="entry name" value="TANDEM PH DOMAIN CONTAINING PROTEIN"/>
    <property type="match status" value="1"/>
</dbReference>
<dbReference type="Pfam" id="PF00169">
    <property type="entry name" value="PH"/>
    <property type="match status" value="1"/>
</dbReference>
<dbReference type="Pfam" id="PF00017">
    <property type="entry name" value="SH2"/>
    <property type="match status" value="1"/>
</dbReference>
<dbReference type="PRINTS" id="PR00678">
    <property type="entry name" value="PI3KINASEP85"/>
</dbReference>
<dbReference type="PRINTS" id="PR00401">
    <property type="entry name" value="SH2DOMAIN"/>
</dbReference>
<dbReference type="SMART" id="SM00233">
    <property type="entry name" value="PH"/>
    <property type="match status" value="1"/>
</dbReference>
<dbReference type="SMART" id="SM00252">
    <property type="entry name" value="SH2"/>
    <property type="match status" value="1"/>
</dbReference>
<dbReference type="SUPFAM" id="SSF50729">
    <property type="entry name" value="PH domain-like"/>
    <property type="match status" value="1"/>
</dbReference>
<dbReference type="SUPFAM" id="SSF55550">
    <property type="entry name" value="SH2 domain"/>
    <property type="match status" value="1"/>
</dbReference>
<dbReference type="PROSITE" id="PS50003">
    <property type="entry name" value="PH_DOMAIN"/>
    <property type="match status" value="1"/>
</dbReference>
<dbReference type="PROSITE" id="PS50001">
    <property type="entry name" value="SH2"/>
    <property type="match status" value="1"/>
</dbReference>
<protein>
    <recommendedName>
        <fullName>Dual adapter for phosphotyrosine and 3-phosphotyrosine and 3-phosphoinositide</fullName>
        <shortName>mDAPP1</shortName>
    </recommendedName>
    <alternativeName>
        <fullName>B lymphocyte adapter protein Bam32</fullName>
    </alternativeName>
    <alternativeName>
        <fullName>B-cell adapter molecule of 32 kDa</fullName>
    </alternativeName>
</protein>
<keyword id="KW-0963">Cytoplasm</keyword>
<keyword id="KW-0472">Membrane</keyword>
<keyword id="KW-0597">Phosphoprotein</keyword>
<keyword id="KW-1185">Reference proteome</keyword>
<keyword id="KW-0727">SH2 domain</keyword>
<organism>
    <name type="scientific">Mus musculus</name>
    <name type="common">Mouse</name>
    <dbReference type="NCBI Taxonomy" id="10090"/>
    <lineage>
        <taxon>Eukaryota</taxon>
        <taxon>Metazoa</taxon>
        <taxon>Chordata</taxon>
        <taxon>Craniata</taxon>
        <taxon>Vertebrata</taxon>
        <taxon>Euteleostomi</taxon>
        <taxon>Mammalia</taxon>
        <taxon>Eutheria</taxon>
        <taxon>Euarchontoglires</taxon>
        <taxon>Glires</taxon>
        <taxon>Rodentia</taxon>
        <taxon>Myomorpha</taxon>
        <taxon>Muroidea</taxon>
        <taxon>Muridae</taxon>
        <taxon>Murinae</taxon>
        <taxon>Mus</taxon>
        <taxon>Mus</taxon>
    </lineage>
</organism>
<accession>Q9QXT1</accession>
<accession>Q9R178</accession>
<reference key="1">
    <citation type="journal article" date="1999" name="Biochem. J.">
        <title>DAPP1: a dual adaptor for phosphotyrosine and 3-phosphoinositides.</title>
        <authorList>
            <person name="Dowler S."/>
            <person name="Currie R.A."/>
            <person name="Downes C.P."/>
            <person name="Alessi D.R."/>
        </authorList>
    </citation>
    <scope>NUCLEOTIDE SEQUENCE [MRNA]</scope>
</reference>
<reference key="2">
    <citation type="journal article" date="2000" name="J. Exp. Med.">
        <title>A novel B lymphocyte-associated adaptor protein, Bam32, regulates antigen receptor signaling downstream of phosphatidylinositol 3-kinase.</title>
        <authorList>
            <person name="Marshall A.J."/>
            <person name="Niiro H."/>
            <person name="Lerner C.G."/>
            <person name="Yun T.J."/>
            <person name="Thomas S."/>
            <person name="Disteche C.M."/>
            <person name="Clark E.A."/>
        </authorList>
    </citation>
    <scope>NUCLEOTIDE SEQUENCE [MRNA]</scope>
    <source>
        <strain>BALB/cJ</strain>
    </source>
</reference>
<reference key="3">
    <citation type="journal article" date="2004" name="Genome Res.">
        <title>The status, quality, and expansion of the NIH full-length cDNA project: the Mammalian Gene Collection (MGC).</title>
        <authorList>
            <consortium name="The MGC Project Team"/>
        </authorList>
    </citation>
    <scope>NUCLEOTIDE SEQUENCE [LARGE SCALE MRNA]</scope>
</reference>
<reference key="4">
    <citation type="journal article" date="2007" name="J. Immunol.">
        <title>Quantitative time-resolved phosphoproteomic analysis of mast cell signaling.</title>
        <authorList>
            <person name="Cao L."/>
            <person name="Yu K."/>
            <person name="Banh C."/>
            <person name="Nguyen V."/>
            <person name="Ritz A."/>
            <person name="Raphael B.J."/>
            <person name="Kawakami Y."/>
            <person name="Kawakami T."/>
            <person name="Salomon A.R."/>
        </authorList>
    </citation>
    <scope>PHOSPHORYLATION [LARGE SCALE ANALYSIS] AT TYR-139 AND SER-141</scope>
    <scope>IDENTIFICATION BY MASS SPECTROMETRY [LARGE SCALE ANALYSIS]</scope>
    <source>
        <tissue>Mast cell</tissue>
    </source>
</reference>
<reference key="5">
    <citation type="journal article" date="2009" name="Immunity">
        <title>The phagosomal proteome in interferon-gamma-activated macrophages.</title>
        <authorList>
            <person name="Trost M."/>
            <person name="English L."/>
            <person name="Lemieux S."/>
            <person name="Courcelles M."/>
            <person name="Desjardins M."/>
            <person name="Thibault P."/>
        </authorList>
    </citation>
    <scope>PHOSPHORYLATION [LARGE SCALE ANALYSIS] AT TYR-139</scope>
    <scope>IDENTIFICATION BY MASS SPECTROMETRY [LARGE SCALE ANALYSIS]</scope>
</reference>
<sequence>MGRAELLGGNMSTQDPSELWGRADGGTDLLQDLGWYHGNLTRHAAEALLLSNGRDGSYLLRDSNEQTGLYSLSVRAKDSVKHFHVEYTGYSFKFGFNEYSSLKDFVKHFANQPLIGSETGTLMVLKHPYPREVEEPCIYESVRVHTAMQTGRTENDLVPTAPSLGTKEGYLTKQGGLVKTWKTRWFTLQRNELKYFKDQMSPEPIRILDLTECSAVQFDYSQERVNCFCLVFPFRTFYLCAKTGVEADEWIKILRWKLSKIRKQLDQGEDTVRSRSFIFK</sequence>
<gene>
    <name type="primary">Dapp1</name>
    <name type="synonym">Bam32</name>
</gene>
<proteinExistence type="evidence at protein level"/>
<name>DAPP1_MOUSE</name>
<feature type="chain" id="PRO_0000079786" description="Dual adapter for phosphotyrosine and 3-phosphotyrosine and 3-phosphoinositide">
    <location>
        <begin position="1"/>
        <end position="280"/>
    </location>
</feature>
<feature type="domain" description="SH2" evidence="3">
    <location>
        <begin position="35"/>
        <end position="129"/>
    </location>
</feature>
<feature type="domain" description="PH" evidence="2">
    <location>
        <begin position="164"/>
        <end position="259"/>
    </location>
</feature>
<feature type="modified residue" description="Phosphotyrosine" evidence="5 6">
    <location>
        <position position="139"/>
    </location>
</feature>
<feature type="modified residue" description="Phosphoserine" evidence="5">
    <location>
        <position position="141"/>
    </location>
</feature>
<feature type="sequence conflict" description="In Ref. 1; AAD49698." evidence="4" ref="1">
    <original>Y</original>
    <variation>C</variation>
    <location>
        <position position="90"/>
    </location>
</feature>
<comment type="function">
    <text>May act as a B-cell-associated adapter that regulates B-cell antigen receptor (BCR)-signaling downstream of PI3K.</text>
</comment>
<comment type="subunit">
    <text evidence="1">Interacts with PtdIns(3,4,5)P3 and PLCG2.</text>
</comment>
<comment type="subcellular location">
    <subcellularLocation>
        <location evidence="1">Cytoplasm</location>
    </subcellularLocation>
    <subcellularLocation>
        <location evidence="1">Membrane</location>
        <topology evidence="1">Peripheral membrane protein</topology>
    </subcellularLocation>
    <text evidence="1">Membrane-associated after cell stimulation leading to its translocation.</text>
</comment>
<comment type="induction">
    <text evidence="1">Upon B-cell activation.</text>
</comment>
<comment type="PTM">
    <text evidence="1">Phosphorylated on tyrosine residues.</text>
</comment>